<protein>
    <recommendedName>
        <fullName>Deoxyribonuclease-1</fullName>
        <ecNumber evidence="5">3.1.21.1</ecNumber>
    </recommendedName>
    <alternativeName>
        <fullName>Deoxyribonuclease I</fullName>
        <shortName>DNase I</shortName>
    </alternativeName>
</protein>
<accession>P11936</accession>
<accession>Q95KK2</accession>
<keyword id="KW-0009">Actin-binding</keyword>
<keyword id="KW-0053">Apoptosis</keyword>
<keyword id="KW-0106">Calcium</keyword>
<keyword id="KW-0968">Cytoplasmic vesicle</keyword>
<keyword id="KW-0903">Direct protein sequencing</keyword>
<keyword id="KW-1015">Disulfide bond</keyword>
<keyword id="KW-0255">Endonuclease</keyword>
<keyword id="KW-0325">Glycoprotein</keyword>
<keyword id="KW-0378">Hydrolase</keyword>
<keyword id="KW-0540">Nuclease</keyword>
<keyword id="KW-0539">Nucleus</keyword>
<keyword id="KW-1185">Reference proteome</keyword>
<keyword id="KW-0964">Secreted</keyword>
<keyword id="KW-0732">Signal</keyword>
<reference key="1">
    <citation type="journal article" date="2001" name="Biochim. Biophys. Acta">
        <title>Molecular, biochemical and immunological analyses of porcine pancreatic DNase I.</title>
        <authorList>
            <person name="Mori S."/>
            <person name="Yasuda T."/>
            <person name="Takeshita H."/>
            <person name="Nakajima T."/>
            <person name="Nakazato E."/>
            <person name="Mogi K."/>
            <person name="Kaneko Y."/>
            <person name="Kishi K."/>
        </authorList>
    </citation>
    <scope>NUCLEOTIDE SEQUENCE [MRNA]</scope>
    <source>
        <tissue>Pancreas</tissue>
    </source>
</reference>
<reference key="2">
    <citation type="journal article" date="1986" name="J. Biol. Chem.">
        <title>Purification, characterization, and the complete amino acid sequence of porcine pancreatic deoxyribonuclease.</title>
        <authorList>
            <person name="Paudel H.K."/>
            <person name="Liao T.-H."/>
        </authorList>
    </citation>
    <scope>PROTEIN SEQUENCE OF 23-284</scope>
    <scope>FUNCTION</scope>
    <scope>CATALYTIC ACTIVITY</scope>
    <scope>GLYCOSYLATION AT ASN-40 AND ASN-128</scope>
    <scope>DISULFIDE BONDS</scope>
    <source>
        <tissue>Pancreas</tissue>
    </source>
</reference>
<organism>
    <name type="scientific">Sus scrofa</name>
    <name type="common">Pig</name>
    <dbReference type="NCBI Taxonomy" id="9823"/>
    <lineage>
        <taxon>Eukaryota</taxon>
        <taxon>Metazoa</taxon>
        <taxon>Chordata</taxon>
        <taxon>Craniata</taxon>
        <taxon>Vertebrata</taxon>
        <taxon>Euteleostomi</taxon>
        <taxon>Mammalia</taxon>
        <taxon>Eutheria</taxon>
        <taxon>Laurasiatheria</taxon>
        <taxon>Artiodactyla</taxon>
        <taxon>Suina</taxon>
        <taxon>Suidae</taxon>
        <taxon>Sus</taxon>
    </lineage>
</organism>
<gene>
    <name type="primary">DNASE1</name>
    <name type="synonym">DNL1</name>
</gene>
<sequence>MRAARLMGALLALAGLLQLALSLRIAAFNIRTFGETKMSNATLSNYIVRILSRYDIALIQEVRDSHLTAVGKLLNELNQDDPNNYHHVVSEPLGRSTYKERYLFVFRPDQVSVLDSYLYDDGCEPCGNDTFNREPSVVKFSSPSTQVKEFAIVPLHAAPSDAAAEIDSLYDVYLNVRQKWDLEDIMLMGDFNAGCSYVTTSHWSSIRLRESPPFQWLIPDTADTTVSSTHCAYDRIVVAGPLLQRAVVPDSAAPFDFQAAFGLSEQTALAISDHYPVEVTLKRA</sequence>
<name>DNAS1_PIG</name>
<feature type="signal peptide" evidence="5">
    <location>
        <begin position="1"/>
        <end position="22"/>
    </location>
</feature>
<feature type="chain" id="PRO_0000007279" description="Deoxyribonuclease-1">
    <location>
        <begin position="23"/>
        <end position="284"/>
    </location>
</feature>
<feature type="active site" evidence="1">
    <location>
        <position position="100"/>
    </location>
</feature>
<feature type="active site" evidence="1">
    <location>
        <position position="156"/>
    </location>
</feature>
<feature type="site" description="Involved in actin-binding" evidence="1">
    <location>
        <position position="35"/>
    </location>
</feature>
<feature type="site" description="Involved in actin-binding" evidence="1">
    <location>
        <position position="89"/>
    </location>
</feature>
<feature type="glycosylation site" description="N-linked (GlcNAc...) asparagine" evidence="5">
    <location>
        <position position="40"/>
    </location>
</feature>
<feature type="glycosylation site" description="N-linked (GlcNAc...) asparagine" evidence="5">
    <location>
        <position position="128"/>
    </location>
</feature>
<feature type="disulfide bond" evidence="5">
    <location>
        <begin position="123"/>
        <end position="126"/>
    </location>
</feature>
<feature type="disulfide bond" description="Essential for enzymatic activity" evidence="1">
    <location>
        <begin position="195"/>
        <end position="231"/>
    </location>
</feature>
<feature type="sequence conflict" description="In Ref. 2; AA sequence." evidence="6" ref="2">
    <original>D</original>
    <variation>N</variation>
    <location>
        <position position="109"/>
    </location>
</feature>
<feature type="sequence conflict" description="In Ref. 2; AA sequence." evidence="6" ref="2">
    <original>S</original>
    <variation>F</variation>
    <location>
        <position position="144"/>
    </location>
</feature>
<feature type="sequence conflict" description="In Ref. 2; AA sequence." evidence="6" ref="2">
    <original>D</original>
    <variation>N</variation>
    <location>
        <position position="167"/>
    </location>
</feature>
<feature type="sequence conflict" description="In Ref. 2; AA sequence." evidence="6" ref="2">
    <original>E</original>
    <variation>Q</variation>
    <location>
        <position position="183"/>
    </location>
</feature>
<feature type="sequence conflict" description="In Ref. 2; AA sequence." evidence="6" ref="2">
    <original>TH</original>
    <variation>HT</variation>
    <location>
        <begin position="229"/>
        <end position="230"/>
    </location>
</feature>
<feature type="sequence conflict" description="In Ref. 2; AA sequence." evidence="6" ref="2">
    <original>EQ</original>
    <variation>QE</variation>
    <location>
        <begin position="265"/>
        <end position="266"/>
    </location>
</feature>
<proteinExistence type="evidence at protein level"/>
<dbReference type="EC" id="3.1.21.1" evidence="5"/>
<dbReference type="EMBL" id="AB048832">
    <property type="protein sequence ID" value="BAB62268.1"/>
    <property type="molecule type" value="mRNA"/>
</dbReference>
<dbReference type="PIR" id="A26324">
    <property type="entry name" value="A26324"/>
</dbReference>
<dbReference type="RefSeq" id="NP_999156.1">
    <property type="nucleotide sequence ID" value="NM_213991.1"/>
</dbReference>
<dbReference type="SMR" id="P11936"/>
<dbReference type="FunCoup" id="P11936">
    <property type="interactions" value="735"/>
</dbReference>
<dbReference type="STRING" id="9823.ENSSSCP00000058337"/>
<dbReference type="GlyCosmos" id="P11936">
    <property type="glycosylation" value="2 sites, No reported glycans"/>
</dbReference>
<dbReference type="GlyGen" id="P11936">
    <property type="glycosylation" value="2 sites"/>
</dbReference>
<dbReference type="iPTMnet" id="P11936"/>
<dbReference type="PaxDb" id="9823-ENSSSCP00000008492"/>
<dbReference type="GeneID" id="397051"/>
<dbReference type="KEGG" id="ssc:397051"/>
<dbReference type="CTD" id="1773"/>
<dbReference type="eggNOG" id="ENOG502QQFT">
    <property type="taxonomic scope" value="Eukaryota"/>
</dbReference>
<dbReference type="InParanoid" id="P11936"/>
<dbReference type="OrthoDB" id="10061407at2759"/>
<dbReference type="BRENDA" id="3.1.21.1">
    <property type="organism ID" value="6170"/>
</dbReference>
<dbReference type="Proteomes" id="UP000008227">
    <property type="component" value="Unplaced"/>
</dbReference>
<dbReference type="Proteomes" id="UP000314985">
    <property type="component" value="Unplaced"/>
</dbReference>
<dbReference type="Proteomes" id="UP000694570">
    <property type="component" value="Unplaced"/>
</dbReference>
<dbReference type="Proteomes" id="UP000694571">
    <property type="component" value="Unplaced"/>
</dbReference>
<dbReference type="Proteomes" id="UP000694720">
    <property type="component" value="Unplaced"/>
</dbReference>
<dbReference type="Proteomes" id="UP000694722">
    <property type="component" value="Unplaced"/>
</dbReference>
<dbReference type="Proteomes" id="UP000694723">
    <property type="component" value="Unplaced"/>
</dbReference>
<dbReference type="Proteomes" id="UP000694724">
    <property type="component" value="Unplaced"/>
</dbReference>
<dbReference type="Proteomes" id="UP000694725">
    <property type="component" value="Unplaced"/>
</dbReference>
<dbReference type="Proteomes" id="UP000694726">
    <property type="component" value="Unplaced"/>
</dbReference>
<dbReference type="Proteomes" id="UP000694727">
    <property type="component" value="Unplaced"/>
</dbReference>
<dbReference type="Proteomes" id="UP000694728">
    <property type="component" value="Unplaced"/>
</dbReference>
<dbReference type="GO" id="GO:0005576">
    <property type="term" value="C:extracellular region"/>
    <property type="evidence" value="ECO:0007669"/>
    <property type="project" value="UniProtKB-SubCell"/>
</dbReference>
<dbReference type="GO" id="GO:0005635">
    <property type="term" value="C:nuclear envelope"/>
    <property type="evidence" value="ECO:0007669"/>
    <property type="project" value="UniProtKB-SubCell"/>
</dbReference>
<dbReference type="GO" id="GO:0005634">
    <property type="term" value="C:nucleus"/>
    <property type="evidence" value="ECO:0000318"/>
    <property type="project" value="GO_Central"/>
</dbReference>
<dbReference type="GO" id="GO:0042588">
    <property type="term" value="C:zymogen granule"/>
    <property type="evidence" value="ECO:0007669"/>
    <property type="project" value="UniProtKB-SubCell"/>
</dbReference>
<dbReference type="GO" id="GO:0003779">
    <property type="term" value="F:actin binding"/>
    <property type="evidence" value="ECO:0007669"/>
    <property type="project" value="UniProtKB-KW"/>
</dbReference>
<dbReference type="GO" id="GO:0004530">
    <property type="term" value="F:deoxyribonuclease I activity"/>
    <property type="evidence" value="ECO:0000318"/>
    <property type="project" value="GO_Central"/>
</dbReference>
<dbReference type="GO" id="GO:0003677">
    <property type="term" value="F:DNA binding"/>
    <property type="evidence" value="ECO:0000318"/>
    <property type="project" value="GO_Central"/>
</dbReference>
<dbReference type="GO" id="GO:0006915">
    <property type="term" value="P:apoptotic process"/>
    <property type="evidence" value="ECO:0007669"/>
    <property type="project" value="UniProtKB-KW"/>
</dbReference>
<dbReference type="GO" id="GO:0006308">
    <property type="term" value="P:DNA catabolic process"/>
    <property type="evidence" value="ECO:0000250"/>
    <property type="project" value="UniProtKB"/>
</dbReference>
<dbReference type="GO" id="GO:0002283">
    <property type="term" value="P:neutrophil activation involved in immune response"/>
    <property type="evidence" value="ECO:0000250"/>
    <property type="project" value="UniProtKB"/>
</dbReference>
<dbReference type="GO" id="GO:0002673">
    <property type="term" value="P:regulation of acute inflammatory response"/>
    <property type="evidence" value="ECO:0000250"/>
    <property type="project" value="UniProtKB"/>
</dbReference>
<dbReference type="GO" id="GO:0070948">
    <property type="term" value="P:regulation of neutrophil mediated cytotoxicity"/>
    <property type="evidence" value="ECO:0000250"/>
    <property type="project" value="UniProtKB"/>
</dbReference>
<dbReference type="CDD" id="cd10282">
    <property type="entry name" value="DNase1"/>
    <property type="match status" value="1"/>
</dbReference>
<dbReference type="FunFam" id="3.60.10.10:FF:000035">
    <property type="entry name" value="Deoxyribonuclease"/>
    <property type="match status" value="1"/>
</dbReference>
<dbReference type="Gene3D" id="3.60.10.10">
    <property type="entry name" value="Endonuclease/exonuclease/phosphatase"/>
    <property type="match status" value="1"/>
</dbReference>
<dbReference type="InterPro" id="IPR018057">
    <property type="entry name" value="Deoxyribonuclease-1_AS"/>
</dbReference>
<dbReference type="InterPro" id="IPR016202">
    <property type="entry name" value="DNase_I"/>
</dbReference>
<dbReference type="InterPro" id="IPR033125">
    <property type="entry name" value="DNASE_I_2"/>
</dbReference>
<dbReference type="InterPro" id="IPR036691">
    <property type="entry name" value="Endo/exonu/phosph_ase_sf"/>
</dbReference>
<dbReference type="InterPro" id="IPR005135">
    <property type="entry name" value="Endo/exonuclease/phosphatase"/>
</dbReference>
<dbReference type="PANTHER" id="PTHR11371">
    <property type="entry name" value="DEOXYRIBONUCLEASE"/>
    <property type="match status" value="1"/>
</dbReference>
<dbReference type="PANTHER" id="PTHR11371:SF27">
    <property type="entry name" value="DEOXYRIBONUCLEASE-1"/>
    <property type="match status" value="1"/>
</dbReference>
<dbReference type="Pfam" id="PF03372">
    <property type="entry name" value="Exo_endo_phos"/>
    <property type="match status" value="1"/>
</dbReference>
<dbReference type="PIRSF" id="PIRSF000988">
    <property type="entry name" value="DNase_I_euk"/>
    <property type="match status" value="1"/>
</dbReference>
<dbReference type="PRINTS" id="PR00130">
    <property type="entry name" value="DNASEI"/>
</dbReference>
<dbReference type="SMART" id="SM00476">
    <property type="entry name" value="DNaseIc"/>
    <property type="match status" value="1"/>
</dbReference>
<dbReference type="SUPFAM" id="SSF56219">
    <property type="entry name" value="DNase I-like"/>
    <property type="match status" value="1"/>
</dbReference>
<dbReference type="PROSITE" id="PS00919">
    <property type="entry name" value="DNASE_I_1"/>
    <property type="match status" value="1"/>
</dbReference>
<dbReference type="PROSITE" id="PS00918">
    <property type="entry name" value="DNASE_I_2"/>
    <property type="match status" value="1"/>
</dbReference>
<evidence type="ECO:0000250" key="1">
    <source>
        <dbReference type="UniProtKB" id="P00639"/>
    </source>
</evidence>
<evidence type="ECO:0000250" key="2">
    <source>
        <dbReference type="UniProtKB" id="P21704"/>
    </source>
</evidence>
<evidence type="ECO:0000250" key="3">
    <source>
        <dbReference type="UniProtKB" id="P24855"/>
    </source>
</evidence>
<evidence type="ECO:0000250" key="4">
    <source>
        <dbReference type="UniProtKB" id="P49183"/>
    </source>
</evidence>
<evidence type="ECO:0000269" key="5">
    <source>
    </source>
</evidence>
<evidence type="ECO:0000305" key="6"/>
<comment type="function">
    <text evidence="2 4 5">Serum endocuclease secreted into body fluids by a wide variety of exocrine and endocrine organs (PubMed:3782104). Expressed by non-hematopoietic tissues and preferentially cleaves protein-free DNA (By similarity). Among other functions, seems to be involved in cell death by apoptosis (PubMed:3782104). Binds specifically to G-actin and blocks actin polymerization (By similarity). Together with DNASE1L3, plays a key role in degrading neutrophil extracellular traps (NETs) (By similarity). NETs are mainly composed of DNA fibers and are released by neutrophils to bind pathogens during inflammation (By similarity). Degradation of intravascular NETs by DNASE1 and DNASE1L3 is required to prevent formation of clots that obstruct blood vessels and cause organ damage following inflammation (By similarity).</text>
</comment>
<comment type="catalytic activity">
    <reaction evidence="5">
        <text>Endonucleolytic cleavage to 5'-phosphodinucleotide and 5'-phosphooligonucleotide end-products.</text>
        <dbReference type="EC" id="3.1.21.1"/>
    </reaction>
</comment>
<comment type="cofactor">
    <cofactor evidence="5">
        <name>Ca(2+)</name>
        <dbReference type="ChEBI" id="CHEBI:29108"/>
    </cofactor>
    <cofactor evidence="5">
        <name>Mg(2+)</name>
        <dbReference type="ChEBI" id="CHEBI:18420"/>
    </cofactor>
    <text evidence="5">Divalent metal cations. Prefers Ca(2+) or Mg(2+).</text>
</comment>
<comment type="subcellular location">
    <subcellularLocation>
        <location evidence="3">Secreted</location>
    </subcellularLocation>
    <subcellularLocation>
        <location evidence="3">Zymogen granule</location>
    </subcellularLocation>
    <subcellularLocation>
        <location evidence="3">Nucleus envelope</location>
    </subcellularLocation>
    <text evidence="3">Secretory protein, stored in zymogen granules and found in the nuclear envelope.</text>
</comment>
<comment type="similarity">
    <text evidence="6">Belongs to the DNase I family.</text>
</comment>